<reference key="1">
    <citation type="journal article" date="2006" name="Nat. Biotechnol.">
        <title>Complete genome sequence of the entomopathogenic and metabolically versatile soil bacterium Pseudomonas entomophila.</title>
        <authorList>
            <person name="Vodovar N."/>
            <person name="Vallenet D."/>
            <person name="Cruveiller S."/>
            <person name="Rouy Z."/>
            <person name="Barbe V."/>
            <person name="Acosta C."/>
            <person name="Cattolico L."/>
            <person name="Jubin C."/>
            <person name="Lajus A."/>
            <person name="Segurens B."/>
            <person name="Vacherie B."/>
            <person name="Wincker P."/>
            <person name="Weissenbach J."/>
            <person name="Lemaitre B."/>
            <person name="Medigue C."/>
            <person name="Boccard F."/>
        </authorList>
    </citation>
    <scope>NUCLEOTIDE SEQUENCE [LARGE SCALE GENOMIC DNA]</scope>
    <source>
        <strain>L48</strain>
    </source>
</reference>
<accession>Q1ICG2</accession>
<feature type="chain" id="PRO_0000298710" description="Pyrimidine/purine nucleoside phosphorylase">
    <location>
        <begin position="1"/>
        <end position="94"/>
    </location>
</feature>
<sequence length="94" mass="10290">MFKVNEYFDGTVKSIAFEGQEGPATVGVMAPGEYEFGTAKREIMHVVSGALTVKLPGSDNWEKFAAGSQFNVPADSKFQLKVAVDTAYLCEYRD</sequence>
<name>PPNP_PSEE4</name>
<dbReference type="EC" id="2.4.2.1" evidence="1"/>
<dbReference type="EC" id="2.4.2.2" evidence="1"/>
<dbReference type="EMBL" id="CT573326">
    <property type="protein sequence ID" value="CAK14651.1"/>
    <property type="molecule type" value="Genomic_DNA"/>
</dbReference>
<dbReference type="RefSeq" id="WP_011533060.1">
    <property type="nucleotide sequence ID" value="NC_008027.1"/>
</dbReference>
<dbReference type="SMR" id="Q1ICG2"/>
<dbReference type="STRING" id="384676.PSEEN1810"/>
<dbReference type="GeneID" id="32805038"/>
<dbReference type="KEGG" id="pen:PSEEN1810"/>
<dbReference type="eggNOG" id="COG3123">
    <property type="taxonomic scope" value="Bacteria"/>
</dbReference>
<dbReference type="HOGENOM" id="CLU_157874_0_0_6"/>
<dbReference type="OrthoDB" id="9793848at2"/>
<dbReference type="Proteomes" id="UP000000658">
    <property type="component" value="Chromosome"/>
</dbReference>
<dbReference type="GO" id="GO:0005829">
    <property type="term" value="C:cytosol"/>
    <property type="evidence" value="ECO:0007669"/>
    <property type="project" value="TreeGrafter"/>
</dbReference>
<dbReference type="GO" id="GO:0047975">
    <property type="term" value="F:guanosine phosphorylase activity"/>
    <property type="evidence" value="ECO:0007669"/>
    <property type="project" value="UniProtKB-EC"/>
</dbReference>
<dbReference type="GO" id="GO:0004731">
    <property type="term" value="F:purine-nucleoside phosphorylase activity"/>
    <property type="evidence" value="ECO:0007669"/>
    <property type="project" value="UniProtKB-UniRule"/>
</dbReference>
<dbReference type="GO" id="GO:0009032">
    <property type="term" value="F:thymidine phosphorylase activity"/>
    <property type="evidence" value="ECO:0007669"/>
    <property type="project" value="UniProtKB-EC"/>
</dbReference>
<dbReference type="GO" id="GO:0004850">
    <property type="term" value="F:uridine phosphorylase activity"/>
    <property type="evidence" value="ECO:0007669"/>
    <property type="project" value="UniProtKB-EC"/>
</dbReference>
<dbReference type="CDD" id="cd20296">
    <property type="entry name" value="cupin_PpnP-like"/>
    <property type="match status" value="1"/>
</dbReference>
<dbReference type="FunFam" id="2.60.120.10:FF:000016">
    <property type="entry name" value="Pyrimidine/purine nucleoside phosphorylase"/>
    <property type="match status" value="1"/>
</dbReference>
<dbReference type="Gene3D" id="2.60.120.10">
    <property type="entry name" value="Jelly Rolls"/>
    <property type="match status" value="1"/>
</dbReference>
<dbReference type="HAMAP" id="MF_01537">
    <property type="entry name" value="Nucleos_phosphorylase_PpnP"/>
    <property type="match status" value="1"/>
</dbReference>
<dbReference type="InterPro" id="IPR009664">
    <property type="entry name" value="Ppnp"/>
</dbReference>
<dbReference type="InterPro" id="IPR014710">
    <property type="entry name" value="RmlC-like_jellyroll"/>
</dbReference>
<dbReference type="InterPro" id="IPR011051">
    <property type="entry name" value="RmlC_Cupin_sf"/>
</dbReference>
<dbReference type="PANTHER" id="PTHR36540">
    <property type="entry name" value="PYRIMIDINE/PURINE NUCLEOSIDE PHOSPHORYLASE"/>
    <property type="match status" value="1"/>
</dbReference>
<dbReference type="PANTHER" id="PTHR36540:SF1">
    <property type="entry name" value="PYRIMIDINE_PURINE NUCLEOSIDE PHOSPHORYLASE"/>
    <property type="match status" value="1"/>
</dbReference>
<dbReference type="Pfam" id="PF06865">
    <property type="entry name" value="Ppnp"/>
    <property type="match status" value="1"/>
</dbReference>
<dbReference type="SUPFAM" id="SSF51182">
    <property type="entry name" value="RmlC-like cupins"/>
    <property type="match status" value="1"/>
</dbReference>
<proteinExistence type="inferred from homology"/>
<comment type="function">
    <text evidence="1">Catalyzes the phosphorolysis of diverse nucleosides, yielding D-ribose 1-phosphate and the respective free bases. Can use uridine, adenosine, guanosine, cytidine, thymidine, inosine and xanthosine as substrates. Also catalyzes the reverse reactions.</text>
</comment>
<comment type="catalytic activity">
    <reaction evidence="1">
        <text>a purine D-ribonucleoside + phosphate = a purine nucleobase + alpha-D-ribose 1-phosphate</text>
        <dbReference type="Rhea" id="RHEA:19805"/>
        <dbReference type="ChEBI" id="CHEBI:26386"/>
        <dbReference type="ChEBI" id="CHEBI:43474"/>
        <dbReference type="ChEBI" id="CHEBI:57720"/>
        <dbReference type="ChEBI" id="CHEBI:142355"/>
        <dbReference type="EC" id="2.4.2.1"/>
    </reaction>
</comment>
<comment type="catalytic activity">
    <reaction evidence="1">
        <text>adenosine + phosphate = alpha-D-ribose 1-phosphate + adenine</text>
        <dbReference type="Rhea" id="RHEA:27642"/>
        <dbReference type="ChEBI" id="CHEBI:16335"/>
        <dbReference type="ChEBI" id="CHEBI:16708"/>
        <dbReference type="ChEBI" id="CHEBI:43474"/>
        <dbReference type="ChEBI" id="CHEBI:57720"/>
        <dbReference type="EC" id="2.4.2.1"/>
    </reaction>
</comment>
<comment type="catalytic activity">
    <reaction evidence="1">
        <text>cytidine + phosphate = cytosine + alpha-D-ribose 1-phosphate</text>
        <dbReference type="Rhea" id="RHEA:52540"/>
        <dbReference type="ChEBI" id="CHEBI:16040"/>
        <dbReference type="ChEBI" id="CHEBI:17562"/>
        <dbReference type="ChEBI" id="CHEBI:43474"/>
        <dbReference type="ChEBI" id="CHEBI:57720"/>
        <dbReference type="EC" id="2.4.2.2"/>
    </reaction>
</comment>
<comment type="catalytic activity">
    <reaction evidence="1">
        <text>guanosine + phosphate = alpha-D-ribose 1-phosphate + guanine</text>
        <dbReference type="Rhea" id="RHEA:13233"/>
        <dbReference type="ChEBI" id="CHEBI:16235"/>
        <dbReference type="ChEBI" id="CHEBI:16750"/>
        <dbReference type="ChEBI" id="CHEBI:43474"/>
        <dbReference type="ChEBI" id="CHEBI:57720"/>
        <dbReference type="EC" id="2.4.2.1"/>
    </reaction>
</comment>
<comment type="catalytic activity">
    <reaction evidence="1">
        <text>inosine + phosphate = alpha-D-ribose 1-phosphate + hypoxanthine</text>
        <dbReference type="Rhea" id="RHEA:27646"/>
        <dbReference type="ChEBI" id="CHEBI:17368"/>
        <dbReference type="ChEBI" id="CHEBI:17596"/>
        <dbReference type="ChEBI" id="CHEBI:43474"/>
        <dbReference type="ChEBI" id="CHEBI:57720"/>
        <dbReference type="EC" id="2.4.2.1"/>
    </reaction>
</comment>
<comment type="catalytic activity">
    <reaction evidence="1">
        <text>thymidine + phosphate = 2-deoxy-alpha-D-ribose 1-phosphate + thymine</text>
        <dbReference type="Rhea" id="RHEA:16037"/>
        <dbReference type="ChEBI" id="CHEBI:17748"/>
        <dbReference type="ChEBI" id="CHEBI:17821"/>
        <dbReference type="ChEBI" id="CHEBI:43474"/>
        <dbReference type="ChEBI" id="CHEBI:57259"/>
        <dbReference type="EC" id="2.4.2.2"/>
    </reaction>
</comment>
<comment type="catalytic activity">
    <reaction evidence="1">
        <text>uridine + phosphate = alpha-D-ribose 1-phosphate + uracil</text>
        <dbReference type="Rhea" id="RHEA:24388"/>
        <dbReference type="ChEBI" id="CHEBI:16704"/>
        <dbReference type="ChEBI" id="CHEBI:17568"/>
        <dbReference type="ChEBI" id="CHEBI:43474"/>
        <dbReference type="ChEBI" id="CHEBI:57720"/>
        <dbReference type="EC" id="2.4.2.2"/>
    </reaction>
</comment>
<comment type="catalytic activity">
    <reaction evidence="1">
        <text>xanthosine + phosphate = alpha-D-ribose 1-phosphate + xanthine</text>
        <dbReference type="Rhea" id="RHEA:27638"/>
        <dbReference type="ChEBI" id="CHEBI:17712"/>
        <dbReference type="ChEBI" id="CHEBI:18107"/>
        <dbReference type="ChEBI" id="CHEBI:43474"/>
        <dbReference type="ChEBI" id="CHEBI:57720"/>
        <dbReference type="EC" id="2.4.2.1"/>
    </reaction>
</comment>
<comment type="similarity">
    <text evidence="1">Belongs to the nucleoside phosphorylase PpnP family.</text>
</comment>
<gene>
    <name evidence="1" type="primary">ppnP</name>
    <name type="ordered locus">PSEEN1810</name>
</gene>
<keyword id="KW-0328">Glycosyltransferase</keyword>
<keyword id="KW-0808">Transferase</keyword>
<protein>
    <recommendedName>
        <fullName evidence="1">Pyrimidine/purine nucleoside phosphorylase</fullName>
        <ecNumber evidence="1">2.4.2.1</ecNumber>
        <ecNumber evidence="1">2.4.2.2</ecNumber>
    </recommendedName>
    <alternativeName>
        <fullName evidence="1">Adenosine phosphorylase</fullName>
    </alternativeName>
    <alternativeName>
        <fullName evidence="1">Cytidine phosphorylase</fullName>
    </alternativeName>
    <alternativeName>
        <fullName evidence="1">Guanosine phosphorylase</fullName>
    </alternativeName>
    <alternativeName>
        <fullName evidence="1">Inosine phosphorylase</fullName>
    </alternativeName>
    <alternativeName>
        <fullName evidence="1">Thymidine phosphorylase</fullName>
    </alternativeName>
    <alternativeName>
        <fullName evidence="1">Uridine phosphorylase</fullName>
    </alternativeName>
    <alternativeName>
        <fullName evidence="1">Xanthosine phosphorylase</fullName>
    </alternativeName>
</protein>
<evidence type="ECO:0000255" key="1">
    <source>
        <dbReference type="HAMAP-Rule" id="MF_01537"/>
    </source>
</evidence>
<organism>
    <name type="scientific">Pseudomonas entomophila (strain L48)</name>
    <dbReference type="NCBI Taxonomy" id="384676"/>
    <lineage>
        <taxon>Bacteria</taxon>
        <taxon>Pseudomonadati</taxon>
        <taxon>Pseudomonadota</taxon>
        <taxon>Gammaproteobacteria</taxon>
        <taxon>Pseudomonadales</taxon>
        <taxon>Pseudomonadaceae</taxon>
        <taxon>Pseudomonas</taxon>
    </lineage>
</organism>